<evidence type="ECO:0000255" key="1">
    <source>
        <dbReference type="PROSITE-ProRule" id="PRU00625"/>
    </source>
</evidence>
<evidence type="ECO:0000256" key="2">
    <source>
        <dbReference type="SAM" id="MobiDB-lite"/>
    </source>
</evidence>
<evidence type="ECO:0000269" key="3">
    <source>
    </source>
</evidence>
<evidence type="ECO:0000269" key="4">
    <source>
    </source>
</evidence>
<evidence type="ECO:0000303" key="5">
    <source>
    </source>
</evidence>
<evidence type="ECO:0000305" key="6"/>
<evidence type="ECO:0000312" key="7">
    <source>
        <dbReference type="Araport" id="AT3G25790"/>
    </source>
</evidence>
<evidence type="ECO:0000312" key="8">
    <source>
        <dbReference type="EMBL" id="BAA95766.1"/>
    </source>
</evidence>
<gene>
    <name evidence="5" type="primary">HHO1</name>
    <name evidence="7" type="ordered locus">At3g25790</name>
    <name evidence="8" type="ORF">K13N2.13</name>
</gene>
<dbReference type="EMBL" id="AB028607">
    <property type="protein sequence ID" value="BAA95766.1"/>
    <property type="molecule type" value="Genomic_DNA"/>
</dbReference>
<dbReference type="EMBL" id="CP002686">
    <property type="protein sequence ID" value="AEE77068.1"/>
    <property type="molecule type" value="Genomic_DNA"/>
</dbReference>
<dbReference type="EMBL" id="AY085570">
    <property type="protein sequence ID" value="AAM62792.1"/>
    <property type="status" value="ALT_INIT"/>
    <property type="molecule type" value="mRNA"/>
</dbReference>
<dbReference type="RefSeq" id="NP_566778.1">
    <property type="nucleotide sequence ID" value="NM_113478.2"/>
</dbReference>
<dbReference type="SMR" id="Q9LS00"/>
<dbReference type="IntAct" id="Q9LS00">
    <property type="interactions" value="22"/>
</dbReference>
<dbReference type="STRING" id="3702.Q9LS00"/>
<dbReference type="PaxDb" id="3702-AT3G25790.1"/>
<dbReference type="EnsemblPlants" id="AT3G25790.1">
    <property type="protein sequence ID" value="AT3G25790.1"/>
    <property type="gene ID" value="AT3G25790"/>
</dbReference>
<dbReference type="GeneID" id="822170"/>
<dbReference type="Gramene" id="AT3G25790.1">
    <property type="protein sequence ID" value="AT3G25790.1"/>
    <property type="gene ID" value="AT3G25790"/>
</dbReference>
<dbReference type="KEGG" id="ath:AT3G25790"/>
<dbReference type="Araport" id="AT3G25790"/>
<dbReference type="TAIR" id="AT3G25790">
    <property type="gene designation" value="HHO1"/>
</dbReference>
<dbReference type="eggNOG" id="ENOG502QSXV">
    <property type="taxonomic scope" value="Eukaryota"/>
</dbReference>
<dbReference type="HOGENOM" id="CLU_036551_0_0_1"/>
<dbReference type="InParanoid" id="Q9LS00"/>
<dbReference type="OMA" id="CYEMSNE"/>
<dbReference type="PhylomeDB" id="Q9LS00"/>
<dbReference type="PRO" id="PR:Q9LS00"/>
<dbReference type="Proteomes" id="UP000006548">
    <property type="component" value="Chromosome 3"/>
</dbReference>
<dbReference type="ExpressionAtlas" id="Q9LS00">
    <property type="expression patterns" value="baseline and differential"/>
</dbReference>
<dbReference type="GO" id="GO:0005634">
    <property type="term" value="C:nucleus"/>
    <property type="evidence" value="ECO:0007669"/>
    <property type="project" value="UniProtKB-SubCell"/>
</dbReference>
<dbReference type="GO" id="GO:0003677">
    <property type="term" value="F:DNA binding"/>
    <property type="evidence" value="ECO:0007669"/>
    <property type="project" value="UniProtKB-KW"/>
</dbReference>
<dbReference type="GO" id="GO:0003700">
    <property type="term" value="F:DNA-binding transcription factor activity"/>
    <property type="evidence" value="ECO:0000314"/>
    <property type="project" value="TAIR"/>
</dbReference>
<dbReference type="GO" id="GO:0016036">
    <property type="term" value="P:cellular response to phosphate starvation"/>
    <property type="evidence" value="ECO:0000315"/>
    <property type="project" value="UniProtKB"/>
</dbReference>
<dbReference type="GO" id="GO:0006355">
    <property type="term" value="P:regulation of DNA-templated transcription"/>
    <property type="evidence" value="ECO:0000304"/>
    <property type="project" value="TAIR"/>
</dbReference>
<dbReference type="GO" id="GO:0090548">
    <property type="term" value="P:response to nitrate starvation"/>
    <property type="evidence" value="ECO:0000315"/>
    <property type="project" value="UniProtKB"/>
</dbReference>
<dbReference type="FunFam" id="1.10.10.60:FF:000002">
    <property type="entry name" value="Myb family transcription factor"/>
    <property type="match status" value="1"/>
</dbReference>
<dbReference type="Gene3D" id="1.10.10.60">
    <property type="entry name" value="Homeodomain-like"/>
    <property type="match status" value="1"/>
</dbReference>
<dbReference type="InterPro" id="IPR009057">
    <property type="entry name" value="Homeodomain-like_sf"/>
</dbReference>
<dbReference type="InterPro" id="IPR044787">
    <property type="entry name" value="HRS1-like"/>
</dbReference>
<dbReference type="InterPro" id="IPR017930">
    <property type="entry name" value="Myb_dom"/>
</dbReference>
<dbReference type="InterPro" id="IPR006447">
    <property type="entry name" value="Myb_dom_plants"/>
</dbReference>
<dbReference type="InterPro" id="IPR001005">
    <property type="entry name" value="SANT/Myb"/>
</dbReference>
<dbReference type="NCBIfam" id="TIGR01557">
    <property type="entry name" value="myb_SHAQKYF"/>
    <property type="match status" value="1"/>
</dbReference>
<dbReference type="PANTHER" id="PTHR31003">
    <property type="entry name" value="MYB FAMILY TRANSCRIPTION FACTOR"/>
    <property type="match status" value="1"/>
</dbReference>
<dbReference type="PANTHER" id="PTHR31003:SF20">
    <property type="entry name" value="TRANSCRIPTION FACTOR HHO1"/>
    <property type="match status" value="1"/>
</dbReference>
<dbReference type="Pfam" id="PF00249">
    <property type="entry name" value="Myb_DNA-binding"/>
    <property type="match status" value="1"/>
</dbReference>
<dbReference type="SUPFAM" id="SSF46689">
    <property type="entry name" value="Homeodomain-like"/>
    <property type="match status" value="1"/>
</dbReference>
<dbReference type="PROSITE" id="PS51294">
    <property type="entry name" value="HTH_MYB"/>
    <property type="match status" value="1"/>
</dbReference>
<feature type="chain" id="PRO_0000439544" description="Transcription factor HHO1">
    <location>
        <begin position="1"/>
        <end position="357"/>
    </location>
</feature>
<feature type="domain" description="HTH myb-type" evidence="1">
    <location>
        <begin position="193"/>
        <end position="253"/>
    </location>
</feature>
<feature type="DNA-binding region" description="H-T-H motif" evidence="1">
    <location>
        <begin position="224"/>
        <end position="249"/>
    </location>
</feature>
<feature type="region of interest" description="Disordered" evidence="2">
    <location>
        <begin position="94"/>
        <end position="117"/>
    </location>
</feature>
<feature type="region of interest" description="Disordered" evidence="2">
    <location>
        <begin position="171"/>
        <end position="198"/>
    </location>
</feature>
<feature type="compositionally biased region" description="Acidic residues" evidence="2">
    <location>
        <begin position="96"/>
        <end position="109"/>
    </location>
</feature>
<feature type="compositionally biased region" description="Polar residues" evidence="2">
    <location>
        <begin position="171"/>
        <end position="182"/>
    </location>
</feature>
<feature type="sequence conflict" description="In Ref. 3; AAM62792." evidence="6" ref="3">
    <original>E</original>
    <variation>ET</variation>
    <location>
        <position position="296"/>
    </location>
</feature>
<protein>
    <recommendedName>
        <fullName evidence="6">Transcription factor HHO1</fullName>
    </recommendedName>
    <alternativeName>
        <fullName evidence="6">MYB-domain transcription factor HHO1</fullName>
    </alternativeName>
    <alternativeName>
        <fullName evidence="5">Protein HRS1 HOMOLOG 1</fullName>
    </alternativeName>
</protein>
<comment type="function">
    <text evidence="3">Probable factor involved in nitrate and phosphate signaling in roots. Integrates nitrate and phosphate starvation responses and adaptation of root architecture, depending on nutrient availabilities. Acts downstream of the nitrate sensor and transporter NPF6.3/NRT1.1. Represses primary root development in response to phosphate deficiency conditions, only when nitrate is present.</text>
</comment>
<comment type="interaction">
    <interactant intactId="EBI-15203988">
        <id>Q9LS00</id>
    </interactant>
    <interactant intactId="EBI-966009">
        <id>O80340</id>
        <label>ERF4</label>
    </interactant>
    <organismsDiffer>false</organismsDiffer>
    <experiments>5</experiments>
</comment>
<comment type="interaction">
    <interactant intactId="EBI-15203988">
        <id>Q9LS00</id>
    </interactant>
    <interactant intactId="EBI-2000137">
        <id>Q9MAI5</id>
        <label>ERF8</label>
    </interactant>
    <organismsDiffer>false</organismsDiffer>
    <experiments>4</experiments>
</comment>
<comment type="interaction">
    <interactant intactId="EBI-15203988">
        <id>Q9LS00</id>
    </interactant>
    <interactant intactId="EBI-632272">
        <id>O24410</id>
        <label>IAA20</label>
    </interactant>
    <organismsDiffer>false</organismsDiffer>
    <experiments>3</experiments>
</comment>
<comment type="interaction">
    <interactant intactId="EBI-15203988">
        <id>Q9LS00</id>
    </interactant>
    <interactant intactId="EBI-3946739">
        <id>Q9FKM7</id>
        <label>IAA33</label>
    </interactant>
    <organismsDiffer>false</organismsDiffer>
    <experiments>3</experiments>
</comment>
<comment type="interaction">
    <interactant intactId="EBI-15203988">
        <id>Q9LS00</id>
    </interactant>
    <interactant intactId="EBI-541115">
        <id>Q9FNZ4</id>
        <label>NIMIN-3</label>
    </interactant>
    <organismsDiffer>false</organismsDiffer>
    <experiments>3</experiments>
</comment>
<comment type="subcellular location">
    <subcellularLocation>
        <location evidence="1 3">Nucleus</location>
    </subcellularLocation>
</comment>
<comment type="induction">
    <text evidence="3 4">Induced by nitrate (PubMed:25723764). Down-regulated under nitrate deprivation conditions (PubMed:27419465).</text>
</comment>
<comment type="sequence caution" evidence="6">
    <conflict type="erroneous initiation">
        <sequence resource="EMBL-CDS" id="AAM62792"/>
    </conflict>
    <text>Truncated N-terminus.</text>
</comment>
<sequence length="357" mass="40370">MIKNLSNMKNDNQKREKCCEYIEALEEERRKINVFQRELPLCVELVTQAIEAYKREISGTSTDNLYGQSECSEQTTGECGRILDLFIPIKHSSTSIEEEVDDKDDDDEEHQSHETDIDFDDKNMKSEWLKSVQLWNQSDAVVSNNRQDRSQEKTETLVELIKINDEAAKKNNNIKSPVTTSDGGSGGGGGRRGQRKNRRCWSQELHRRFLNALKQLGGPHVATPKQIRDIMKVDGLTNDEVKSHLQKYRLHARRPSQTTPNNRNSQTQHFVVVGGIWVPQTNHSTANAVNAVASGETTGIYGPMVSSLPSEWPRHSNFGRKISEDRSRCSNNGFFRCSSPAMSCSTRTKTKDAKIIS</sequence>
<organism>
    <name type="scientific">Arabidopsis thaliana</name>
    <name type="common">Mouse-ear cress</name>
    <dbReference type="NCBI Taxonomy" id="3702"/>
    <lineage>
        <taxon>Eukaryota</taxon>
        <taxon>Viridiplantae</taxon>
        <taxon>Streptophyta</taxon>
        <taxon>Embryophyta</taxon>
        <taxon>Tracheophyta</taxon>
        <taxon>Spermatophyta</taxon>
        <taxon>Magnoliopsida</taxon>
        <taxon>eudicotyledons</taxon>
        <taxon>Gunneridae</taxon>
        <taxon>Pentapetalae</taxon>
        <taxon>rosids</taxon>
        <taxon>malvids</taxon>
        <taxon>Brassicales</taxon>
        <taxon>Brassicaceae</taxon>
        <taxon>Camelineae</taxon>
        <taxon>Arabidopsis</taxon>
    </lineage>
</organism>
<keyword id="KW-0238">DNA-binding</keyword>
<keyword id="KW-0539">Nucleus</keyword>
<keyword id="KW-1185">Reference proteome</keyword>
<keyword id="KW-0804">Transcription</keyword>
<keyword id="KW-0805">Transcription regulation</keyword>
<proteinExistence type="evidence at protein level"/>
<name>HHO1_ARATH</name>
<reference key="1">
    <citation type="journal article" date="2000" name="DNA Res.">
        <title>Structural analysis of Arabidopsis thaliana chromosome 3. I. Sequence features of the regions of 4,504,864 bp covered by sixty P1 and TAC clones.</title>
        <authorList>
            <person name="Sato S."/>
            <person name="Nakamura Y."/>
            <person name="Kaneko T."/>
            <person name="Katoh T."/>
            <person name="Asamizu E."/>
            <person name="Tabata S."/>
        </authorList>
    </citation>
    <scope>NUCLEOTIDE SEQUENCE [LARGE SCALE GENOMIC DNA]</scope>
    <source>
        <strain>cv. Columbia</strain>
    </source>
</reference>
<reference key="2">
    <citation type="journal article" date="2017" name="Plant J.">
        <title>Araport11: a complete reannotation of the Arabidopsis thaliana reference genome.</title>
        <authorList>
            <person name="Cheng C.Y."/>
            <person name="Krishnakumar V."/>
            <person name="Chan A.P."/>
            <person name="Thibaud-Nissen F."/>
            <person name="Schobel S."/>
            <person name="Town C.D."/>
        </authorList>
    </citation>
    <scope>GENOME REANNOTATION</scope>
    <source>
        <strain>cv. Columbia</strain>
    </source>
</reference>
<reference key="3">
    <citation type="submission" date="2002-03" db="EMBL/GenBank/DDBJ databases">
        <title>Full-length cDNA from Arabidopsis thaliana.</title>
        <authorList>
            <person name="Brover V.V."/>
            <person name="Troukhan M.E."/>
            <person name="Alexandrov N.A."/>
            <person name="Lu Y.-P."/>
            <person name="Flavell R.B."/>
            <person name="Feldmann K.A."/>
        </authorList>
    </citation>
    <scope>NUCLEOTIDE SEQUENCE [LARGE SCALE MRNA]</scope>
</reference>
<reference key="4">
    <citation type="journal article" date="2015" name="Nat. Commun.">
        <title>AtNIGT1/HRS1 integrates nitrate and phosphate signals at the Arabidopsis root tip.</title>
        <authorList>
            <person name="Medici A."/>
            <person name="Marshall-Colon A."/>
            <person name="Ronzier E."/>
            <person name="Szponarski W."/>
            <person name="Wang R."/>
            <person name="Gojon A."/>
            <person name="Crawford N.M."/>
            <person name="Ruffel S."/>
            <person name="Coruzzi G.M."/>
            <person name="Krouk G."/>
        </authorList>
    </citation>
    <scope>FUNCTION</scope>
    <scope>SUBCELLULAR LOCATION</scope>
    <scope>INDUCTION BY NITRATE</scope>
</reference>
<reference key="5">
    <citation type="journal article" date="2016" name="Plant J.">
        <title>Early nitrogen-deprivation responses in Arabidopsis roots reveal distinct differences on transcriptome and (phospho-) proteome levels between nitrate and ammonium nutrition.</title>
        <authorList>
            <person name="Menz J."/>
            <person name="Li Z."/>
            <person name="Schulze W.X."/>
            <person name="Ludewig U."/>
        </authorList>
    </citation>
    <scope>INDUCTION</scope>
</reference>
<accession>Q9LS00</accession>
<accession>Q8LE82</accession>